<evidence type="ECO:0000255" key="1">
    <source>
        <dbReference type="HAMAP-Rule" id="MF_01147"/>
    </source>
</evidence>
<feature type="chain" id="PRO_0000172712" description="Phosphatidylglycerol--prolipoprotein diacylglyceryl transferase">
    <location>
        <begin position="1"/>
        <end position="271"/>
    </location>
</feature>
<feature type="transmembrane region" description="Helical" evidence="1">
    <location>
        <begin position="21"/>
        <end position="41"/>
    </location>
</feature>
<feature type="transmembrane region" description="Helical" evidence="1">
    <location>
        <begin position="60"/>
        <end position="80"/>
    </location>
</feature>
<feature type="transmembrane region" description="Helical" evidence="1">
    <location>
        <begin position="95"/>
        <end position="115"/>
    </location>
</feature>
<feature type="transmembrane region" description="Helical" evidence="1">
    <location>
        <begin position="124"/>
        <end position="144"/>
    </location>
</feature>
<feature type="transmembrane region" description="Helical" evidence="1">
    <location>
        <begin position="176"/>
        <end position="196"/>
    </location>
</feature>
<feature type="transmembrane region" description="Helical" evidence="1">
    <location>
        <begin position="203"/>
        <end position="223"/>
    </location>
</feature>
<feature type="transmembrane region" description="Helical" evidence="1">
    <location>
        <begin position="230"/>
        <end position="250"/>
    </location>
</feature>
<feature type="binding site" evidence="1">
    <location>
        <position position="143"/>
    </location>
    <ligand>
        <name>a 1,2-diacyl-sn-glycero-3-phospho-(1'-sn-glycerol)</name>
        <dbReference type="ChEBI" id="CHEBI:64716"/>
    </ligand>
</feature>
<organism>
    <name type="scientific">Vibrio vulnificus (strain CMCP6)</name>
    <dbReference type="NCBI Taxonomy" id="216895"/>
    <lineage>
        <taxon>Bacteria</taxon>
        <taxon>Pseudomonadati</taxon>
        <taxon>Pseudomonadota</taxon>
        <taxon>Gammaproteobacteria</taxon>
        <taxon>Vibrionales</taxon>
        <taxon>Vibrionaceae</taxon>
        <taxon>Vibrio</taxon>
    </lineage>
</organism>
<sequence>MSQGYLPFPNIDPVFFSIGPISVRWYGLMYLFGFLFAMWLANRRADKPGSGWTREQVSDLLFAGFLGVVLGGRIGYVLFYNFDLFLADPIYLFKVWTGGMSFHGGLLGVITAMLWYAKKNGRTFFGVADFVAPLVPFGLGVGRLGNFMNGELWGRVTDVPWAMVFPTGGPLPRHPSQLYEMALEGVVLFFILNWFIRKPRPLGSVSGLFLAGYGTFRFLVEYVREPDAQLGLFGGFISMGQILSSPMIIGGLALMAWAYKRGHYQDKVTVK</sequence>
<keyword id="KW-0997">Cell inner membrane</keyword>
<keyword id="KW-1003">Cell membrane</keyword>
<keyword id="KW-0472">Membrane</keyword>
<keyword id="KW-0808">Transferase</keyword>
<keyword id="KW-0812">Transmembrane</keyword>
<keyword id="KW-1133">Transmembrane helix</keyword>
<dbReference type="EC" id="2.5.1.145" evidence="1"/>
<dbReference type="EMBL" id="AE016795">
    <property type="protein sequence ID" value="AAO09035.2"/>
    <property type="molecule type" value="Genomic_DNA"/>
</dbReference>
<dbReference type="RefSeq" id="WP_011078605.1">
    <property type="nucleotide sequence ID" value="NC_004459.3"/>
</dbReference>
<dbReference type="SMR" id="Q8DER8"/>
<dbReference type="GeneID" id="93894829"/>
<dbReference type="KEGG" id="vvu:VV1_0517"/>
<dbReference type="HOGENOM" id="CLU_013386_1_0_6"/>
<dbReference type="UniPathway" id="UPA00664"/>
<dbReference type="Proteomes" id="UP000002275">
    <property type="component" value="Chromosome 1"/>
</dbReference>
<dbReference type="GO" id="GO:0005886">
    <property type="term" value="C:plasma membrane"/>
    <property type="evidence" value="ECO:0007669"/>
    <property type="project" value="UniProtKB-SubCell"/>
</dbReference>
<dbReference type="GO" id="GO:0008961">
    <property type="term" value="F:phosphatidylglycerol-prolipoprotein diacylglyceryl transferase activity"/>
    <property type="evidence" value="ECO:0007669"/>
    <property type="project" value="UniProtKB-UniRule"/>
</dbReference>
<dbReference type="GO" id="GO:0042158">
    <property type="term" value="P:lipoprotein biosynthetic process"/>
    <property type="evidence" value="ECO:0007669"/>
    <property type="project" value="UniProtKB-UniRule"/>
</dbReference>
<dbReference type="HAMAP" id="MF_01147">
    <property type="entry name" value="Lgt"/>
    <property type="match status" value="1"/>
</dbReference>
<dbReference type="InterPro" id="IPR001640">
    <property type="entry name" value="Lgt"/>
</dbReference>
<dbReference type="NCBIfam" id="TIGR00544">
    <property type="entry name" value="lgt"/>
    <property type="match status" value="1"/>
</dbReference>
<dbReference type="PANTHER" id="PTHR30589:SF0">
    <property type="entry name" value="PHOSPHATIDYLGLYCEROL--PROLIPOPROTEIN DIACYLGLYCERYL TRANSFERASE"/>
    <property type="match status" value="1"/>
</dbReference>
<dbReference type="PANTHER" id="PTHR30589">
    <property type="entry name" value="PROLIPOPROTEIN DIACYLGLYCERYL TRANSFERASE"/>
    <property type="match status" value="1"/>
</dbReference>
<dbReference type="Pfam" id="PF01790">
    <property type="entry name" value="LGT"/>
    <property type="match status" value="1"/>
</dbReference>
<dbReference type="PROSITE" id="PS01311">
    <property type="entry name" value="LGT"/>
    <property type="match status" value="1"/>
</dbReference>
<gene>
    <name evidence="1" type="primary">lgt</name>
    <name type="ordered locus">VV1_0517</name>
</gene>
<reference key="1">
    <citation type="submission" date="2002-12" db="EMBL/GenBank/DDBJ databases">
        <title>Complete genome sequence of Vibrio vulnificus CMCP6.</title>
        <authorList>
            <person name="Rhee J.H."/>
            <person name="Kim S.Y."/>
            <person name="Chung S.S."/>
            <person name="Kim J.J."/>
            <person name="Moon Y.H."/>
            <person name="Jeong H."/>
            <person name="Choy H.E."/>
        </authorList>
    </citation>
    <scope>NUCLEOTIDE SEQUENCE [LARGE SCALE GENOMIC DNA]</scope>
    <source>
        <strain>CMCP6</strain>
    </source>
</reference>
<proteinExistence type="inferred from homology"/>
<comment type="function">
    <text evidence="1">Catalyzes the transfer of the diacylglyceryl group from phosphatidylglycerol to the sulfhydryl group of the N-terminal cysteine of a prolipoprotein, the first step in the formation of mature lipoproteins.</text>
</comment>
<comment type="catalytic activity">
    <reaction evidence="1">
        <text>L-cysteinyl-[prolipoprotein] + a 1,2-diacyl-sn-glycero-3-phospho-(1'-sn-glycerol) = an S-1,2-diacyl-sn-glyceryl-L-cysteinyl-[prolipoprotein] + sn-glycerol 1-phosphate + H(+)</text>
        <dbReference type="Rhea" id="RHEA:56712"/>
        <dbReference type="Rhea" id="RHEA-COMP:14679"/>
        <dbReference type="Rhea" id="RHEA-COMP:14680"/>
        <dbReference type="ChEBI" id="CHEBI:15378"/>
        <dbReference type="ChEBI" id="CHEBI:29950"/>
        <dbReference type="ChEBI" id="CHEBI:57685"/>
        <dbReference type="ChEBI" id="CHEBI:64716"/>
        <dbReference type="ChEBI" id="CHEBI:140658"/>
        <dbReference type="EC" id="2.5.1.145"/>
    </reaction>
</comment>
<comment type="pathway">
    <text evidence="1">Protein modification; lipoprotein biosynthesis (diacylglyceryl transfer).</text>
</comment>
<comment type="subcellular location">
    <subcellularLocation>
        <location evidence="1">Cell inner membrane</location>
        <topology evidence="1">Multi-pass membrane protein</topology>
    </subcellularLocation>
</comment>
<comment type="similarity">
    <text evidence="1">Belongs to the Lgt family.</text>
</comment>
<protein>
    <recommendedName>
        <fullName evidence="1">Phosphatidylglycerol--prolipoprotein diacylglyceryl transferase</fullName>
        <ecNumber evidence="1">2.5.1.145</ecNumber>
    </recommendedName>
</protein>
<name>LGT_VIBVU</name>
<accession>Q8DER8</accession>